<keyword id="KW-1283">Bacterial microcompartment</keyword>
<keyword id="KW-0846">Cobalamin</keyword>
<keyword id="KW-0170">Cobalt</keyword>
<keyword id="KW-0456">Lyase</keyword>
<comment type="function">
    <text evidence="1">Catalyzes the deamination of various vicinal amino-alcohols to oxo compounds. Allows this organism to utilize ethanolamine as the sole source of nitrogen and carbon in the presence of external vitamin B12.</text>
</comment>
<comment type="catalytic activity">
    <reaction evidence="1">
        <text>ethanolamine = acetaldehyde + NH4(+)</text>
        <dbReference type="Rhea" id="RHEA:15313"/>
        <dbReference type="ChEBI" id="CHEBI:15343"/>
        <dbReference type="ChEBI" id="CHEBI:28938"/>
        <dbReference type="ChEBI" id="CHEBI:57603"/>
        <dbReference type="EC" id="4.3.1.7"/>
    </reaction>
</comment>
<comment type="cofactor">
    <cofactor evidence="1">
        <name>adenosylcob(III)alamin</name>
        <dbReference type="ChEBI" id="CHEBI:18408"/>
    </cofactor>
    <text evidence="1">Binds between the large and small subunits.</text>
</comment>
<comment type="pathway">
    <text evidence="1">Amine and polyamine degradation; ethanolamine degradation.</text>
</comment>
<comment type="subunit">
    <text evidence="1">The basic unit is a heterodimer which dimerizes to form tetramers. The heterotetramers trimerize; 6 large subunits form a core ring with 6 small subunits projecting outwards.</text>
</comment>
<comment type="subcellular location">
    <subcellularLocation>
        <location evidence="1">Bacterial microcompartment</location>
    </subcellularLocation>
</comment>
<comment type="similarity">
    <text evidence="1">Belongs to the EutC family.</text>
</comment>
<name>EUTC_PSEPW</name>
<sequence>MDRQIPTPENPWLALRNLTPARIALGRSGISLPTSAQLDFQFAHAQARDAVHLAFDHTALSEQLKERGRDSLVLHSAASDRNQYLQRPDLGRRLNERSVEQLRQHAKTNPGGCDLAIVVADGLSALAVHRHTLPFLARFEEQAAADGWTSAPVVLVEQGRVAVADEVGQLLGARMTVMLIGERPGLSSPDSLGLYFTYAPKVGLTDAYRNCISNVRLEGLSYGMAAHRLLYLMREACRRQLSGVNLKDEAEVHTIDSENTSNQKGNFLLGEG</sequence>
<dbReference type="EC" id="4.3.1.7" evidence="1"/>
<dbReference type="EMBL" id="CP000949">
    <property type="protein sequence ID" value="ACA71099.1"/>
    <property type="molecule type" value="Genomic_DNA"/>
</dbReference>
<dbReference type="SMR" id="B1J153"/>
<dbReference type="STRING" id="390235.PputW619_0594"/>
<dbReference type="KEGG" id="ppw:PputW619_0594"/>
<dbReference type="eggNOG" id="COG4302">
    <property type="taxonomic scope" value="Bacteria"/>
</dbReference>
<dbReference type="HOGENOM" id="CLU_068224_1_0_6"/>
<dbReference type="OrthoDB" id="114248at2"/>
<dbReference type="UniPathway" id="UPA00560"/>
<dbReference type="GO" id="GO:0009350">
    <property type="term" value="C:ethanolamine ammonia-lyase complex"/>
    <property type="evidence" value="ECO:0007669"/>
    <property type="project" value="UniProtKB-UniRule"/>
</dbReference>
<dbReference type="GO" id="GO:0031471">
    <property type="term" value="C:ethanolamine degradation polyhedral organelle"/>
    <property type="evidence" value="ECO:0007669"/>
    <property type="project" value="UniProtKB-UniRule"/>
</dbReference>
<dbReference type="GO" id="GO:0031419">
    <property type="term" value="F:cobalamin binding"/>
    <property type="evidence" value="ECO:0007669"/>
    <property type="project" value="UniProtKB-UniRule"/>
</dbReference>
<dbReference type="GO" id="GO:0008851">
    <property type="term" value="F:ethanolamine ammonia-lyase activity"/>
    <property type="evidence" value="ECO:0007669"/>
    <property type="project" value="UniProtKB-UniRule"/>
</dbReference>
<dbReference type="GO" id="GO:0006520">
    <property type="term" value="P:amino acid metabolic process"/>
    <property type="evidence" value="ECO:0007669"/>
    <property type="project" value="InterPro"/>
</dbReference>
<dbReference type="GO" id="GO:0046336">
    <property type="term" value="P:ethanolamine catabolic process"/>
    <property type="evidence" value="ECO:0007669"/>
    <property type="project" value="UniProtKB-UniRule"/>
</dbReference>
<dbReference type="FunFam" id="1.10.30.40:FF:000001">
    <property type="entry name" value="Ethanolamine ammonia-lyase light chain"/>
    <property type="match status" value="1"/>
</dbReference>
<dbReference type="FunFam" id="3.40.50.11240:FF:000001">
    <property type="entry name" value="Ethanolamine ammonia-lyase light chain"/>
    <property type="match status" value="1"/>
</dbReference>
<dbReference type="Gene3D" id="3.40.50.11240">
    <property type="entry name" value="Ethanolamine ammonia-lyase light chain (EutC)"/>
    <property type="match status" value="1"/>
</dbReference>
<dbReference type="Gene3D" id="1.10.30.40">
    <property type="entry name" value="Ethanolamine ammonia-lyase light chain (EutC), N-terminal domain"/>
    <property type="match status" value="1"/>
</dbReference>
<dbReference type="HAMAP" id="MF_00601">
    <property type="entry name" value="EutC"/>
    <property type="match status" value="1"/>
</dbReference>
<dbReference type="InterPro" id="IPR009246">
    <property type="entry name" value="EutC"/>
</dbReference>
<dbReference type="InterPro" id="IPR042251">
    <property type="entry name" value="EutC_C"/>
</dbReference>
<dbReference type="InterPro" id="IPR042255">
    <property type="entry name" value="EutC_N"/>
</dbReference>
<dbReference type="NCBIfam" id="NF003971">
    <property type="entry name" value="PRK05465.1"/>
    <property type="match status" value="1"/>
</dbReference>
<dbReference type="PANTHER" id="PTHR39330">
    <property type="entry name" value="ETHANOLAMINE AMMONIA-LYASE LIGHT CHAIN"/>
    <property type="match status" value="1"/>
</dbReference>
<dbReference type="PANTHER" id="PTHR39330:SF1">
    <property type="entry name" value="ETHANOLAMINE AMMONIA-LYASE SMALL SUBUNIT"/>
    <property type="match status" value="1"/>
</dbReference>
<dbReference type="Pfam" id="PF05985">
    <property type="entry name" value="EutC"/>
    <property type="match status" value="1"/>
</dbReference>
<dbReference type="PIRSF" id="PIRSF018982">
    <property type="entry name" value="EutC"/>
    <property type="match status" value="1"/>
</dbReference>
<gene>
    <name evidence="1" type="primary">eutC</name>
    <name type="ordered locus">PputW619_0594</name>
</gene>
<evidence type="ECO:0000255" key="1">
    <source>
        <dbReference type="HAMAP-Rule" id="MF_00601"/>
    </source>
</evidence>
<reference key="1">
    <citation type="submission" date="2008-02" db="EMBL/GenBank/DDBJ databases">
        <title>Complete sequence of Pseudomonas putida W619.</title>
        <authorList>
            <person name="Copeland A."/>
            <person name="Lucas S."/>
            <person name="Lapidus A."/>
            <person name="Barry K."/>
            <person name="Detter J.C."/>
            <person name="Glavina del Rio T."/>
            <person name="Dalin E."/>
            <person name="Tice H."/>
            <person name="Pitluck S."/>
            <person name="Chain P."/>
            <person name="Malfatti S."/>
            <person name="Shin M."/>
            <person name="Vergez L."/>
            <person name="Schmutz J."/>
            <person name="Larimer F."/>
            <person name="Land M."/>
            <person name="Hauser L."/>
            <person name="Kyrpides N."/>
            <person name="Kim E."/>
            <person name="Taghavi S."/>
            <person name="Vangronsveld D."/>
            <person name="van der Lelie D."/>
            <person name="Richardson P."/>
        </authorList>
    </citation>
    <scope>NUCLEOTIDE SEQUENCE [LARGE SCALE GENOMIC DNA]</scope>
    <source>
        <strain>W619</strain>
    </source>
</reference>
<accession>B1J153</accession>
<organism>
    <name type="scientific">Pseudomonas putida (strain W619)</name>
    <dbReference type="NCBI Taxonomy" id="390235"/>
    <lineage>
        <taxon>Bacteria</taxon>
        <taxon>Pseudomonadati</taxon>
        <taxon>Pseudomonadota</taxon>
        <taxon>Gammaproteobacteria</taxon>
        <taxon>Pseudomonadales</taxon>
        <taxon>Pseudomonadaceae</taxon>
        <taxon>Pseudomonas</taxon>
    </lineage>
</organism>
<protein>
    <recommendedName>
        <fullName evidence="1">Ethanolamine ammonia-lyase small subunit</fullName>
        <shortName evidence="1">EAL small subunit</shortName>
        <ecNumber evidence="1">4.3.1.7</ecNumber>
    </recommendedName>
</protein>
<proteinExistence type="inferred from homology"/>
<feature type="chain" id="PRO_1000130095" description="Ethanolamine ammonia-lyase small subunit">
    <location>
        <begin position="1"/>
        <end position="272"/>
    </location>
</feature>
<feature type="binding site" evidence="1">
    <location>
        <position position="161"/>
    </location>
    <ligand>
        <name>adenosylcob(III)alamin</name>
        <dbReference type="ChEBI" id="CHEBI:18408"/>
    </ligand>
</feature>
<feature type="binding site" evidence="1">
    <location>
        <position position="182"/>
    </location>
    <ligand>
        <name>adenosylcob(III)alamin</name>
        <dbReference type="ChEBI" id="CHEBI:18408"/>
    </ligand>
</feature>
<feature type="binding site" evidence="1">
    <location>
        <position position="211"/>
    </location>
    <ligand>
        <name>adenosylcob(III)alamin</name>
        <dbReference type="ChEBI" id="CHEBI:18408"/>
    </ligand>
</feature>